<proteinExistence type="evidence at protein level"/>
<reference key="1">
    <citation type="journal article" date="2015" name="J. Exp. Bot.">
        <title>The floral transcriptome of ylang ylang (Cananga odorata var. fruticosa) uncovers biosynthetic pathways for volatile organic compounds and a multifunctional and novel sesquiterpene synthase.</title>
        <authorList>
            <person name="Jin J."/>
            <person name="Kim M.J."/>
            <person name="Dhandapani S."/>
            <person name="Tjhang J.G."/>
            <person name="Yin J.L."/>
            <person name="Wong L."/>
            <person name="Sarojam R."/>
            <person name="Chua N.H."/>
            <person name="Jang I.C."/>
        </authorList>
    </citation>
    <scope>NUCLEOTIDE SEQUENCE [MRNA]</scope>
    <scope>FUNCTION</scope>
    <scope>CATALYTIC ACTIVITY</scope>
    <scope>SUBCELLULAR LOCATION</scope>
    <scope>MOTIF</scope>
</reference>
<evidence type="ECO:0000250" key="1">
    <source>
        <dbReference type="UniProtKB" id="Q40577"/>
    </source>
</evidence>
<evidence type="ECO:0000255" key="2"/>
<evidence type="ECO:0000269" key="3">
    <source>
    </source>
</evidence>
<evidence type="ECO:0000303" key="4">
    <source>
    </source>
</evidence>
<evidence type="ECO:0000305" key="5"/>
<evidence type="ECO:0000305" key="6">
    <source>
    </source>
</evidence>
<keyword id="KW-0150">Chloroplast</keyword>
<keyword id="KW-0378">Hydrolase</keyword>
<keyword id="KW-0460">Magnesium</keyword>
<keyword id="KW-0479">Metal-binding</keyword>
<keyword id="KW-0934">Plastid</keyword>
<keyword id="KW-0809">Transit peptide</keyword>
<comment type="function">
    <text evidence="3">Monoterpene synthase involved in the biosynthesis of volatile organic compounds (PubMed:25956881). Mediates the conversion of (2E)-geranyl diphosphate (GPP) into the acyclic monoterpene, geraniol (PubMed:25956881). Does not use (2E,6E)-farnesyl diphosphate (FPP) as substrate (PubMed:25956881).</text>
</comment>
<comment type="catalytic activity">
    <reaction evidence="3">
        <text>(2E)-geranyl diphosphate + H2O = (2E)-geraniol + diphosphate</text>
        <dbReference type="Rhea" id="RHEA:32679"/>
        <dbReference type="ChEBI" id="CHEBI:15377"/>
        <dbReference type="ChEBI" id="CHEBI:17447"/>
        <dbReference type="ChEBI" id="CHEBI:33019"/>
        <dbReference type="ChEBI" id="CHEBI:58057"/>
        <dbReference type="EC" id="3.1.7.11"/>
    </reaction>
    <physiologicalReaction direction="left-to-right" evidence="3">
        <dbReference type="Rhea" id="RHEA:32680"/>
    </physiologicalReaction>
</comment>
<comment type="cofactor">
    <cofactor evidence="1">
        <name>Mg(2+)</name>
        <dbReference type="ChEBI" id="CHEBI:18420"/>
    </cofactor>
    <text evidence="1">Binds 3 Mg(2+) ions per subunit.</text>
</comment>
<comment type="pathway">
    <text evidence="5">Secondary metabolite biosynthesis; terpenoid biosynthesis.</text>
</comment>
<comment type="subunit">
    <text evidence="1">Monomer.</text>
</comment>
<comment type="subcellular location">
    <subcellularLocation>
        <location evidence="3">Plastid</location>
        <location evidence="3">Chloroplast</location>
    </subcellularLocation>
</comment>
<comment type="domain">
    <text evidence="6">The Asp-Asp-Xaa-Xaa-Asp/Glu (DDXXD/E) motif is important for the catalytic activity, presumably through binding to Mg(2+).</text>
</comment>
<comment type="similarity">
    <text evidence="5">Belongs to the terpene synthase family. Tpsg subfamily.</text>
</comment>
<accession>A0A7G5KLV3</accession>
<dbReference type="EC" id="3.1.7.11" evidence="3"/>
<dbReference type="EMBL" id="MN230108">
    <property type="protein sequence ID" value="QMW48845.1"/>
    <property type="molecule type" value="mRNA"/>
</dbReference>
<dbReference type="SMR" id="A0A7G5KLV3"/>
<dbReference type="UniPathway" id="UPA00213"/>
<dbReference type="GO" id="GO:0009507">
    <property type="term" value="C:chloroplast"/>
    <property type="evidence" value="ECO:0007669"/>
    <property type="project" value="UniProtKB-SubCell"/>
</dbReference>
<dbReference type="GO" id="GO:0016787">
    <property type="term" value="F:hydrolase activity"/>
    <property type="evidence" value="ECO:0007669"/>
    <property type="project" value="UniProtKB-KW"/>
</dbReference>
<dbReference type="GO" id="GO:0000287">
    <property type="term" value="F:magnesium ion binding"/>
    <property type="evidence" value="ECO:0007669"/>
    <property type="project" value="InterPro"/>
</dbReference>
<dbReference type="GO" id="GO:0010333">
    <property type="term" value="F:terpene synthase activity"/>
    <property type="evidence" value="ECO:0007669"/>
    <property type="project" value="InterPro"/>
</dbReference>
<dbReference type="GO" id="GO:0016102">
    <property type="term" value="P:diterpenoid biosynthetic process"/>
    <property type="evidence" value="ECO:0007669"/>
    <property type="project" value="InterPro"/>
</dbReference>
<dbReference type="CDD" id="cd00684">
    <property type="entry name" value="Terpene_cyclase_plant_C1"/>
    <property type="match status" value="1"/>
</dbReference>
<dbReference type="FunFam" id="1.10.600.10:FF:000007">
    <property type="entry name" value="Isoprene synthase, chloroplastic"/>
    <property type="match status" value="1"/>
</dbReference>
<dbReference type="FunFam" id="1.50.10.130:FF:000001">
    <property type="entry name" value="Isoprene synthase, chloroplastic"/>
    <property type="match status" value="1"/>
</dbReference>
<dbReference type="Gene3D" id="1.10.600.10">
    <property type="entry name" value="Farnesyl Diphosphate Synthase"/>
    <property type="match status" value="1"/>
</dbReference>
<dbReference type="Gene3D" id="1.50.10.130">
    <property type="entry name" value="Terpene synthase, N-terminal domain"/>
    <property type="match status" value="1"/>
</dbReference>
<dbReference type="InterPro" id="IPR008949">
    <property type="entry name" value="Isoprenoid_synthase_dom_sf"/>
</dbReference>
<dbReference type="InterPro" id="IPR034741">
    <property type="entry name" value="Terpene_cyclase-like_1_C"/>
</dbReference>
<dbReference type="InterPro" id="IPR044814">
    <property type="entry name" value="Terpene_cyclase_plant_C1"/>
</dbReference>
<dbReference type="InterPro" id="IPR001906">
    <property type="entry name" value="Terpene_synth_N"/>
</dbReference>
<dbReference type="InterPro" id="IPR036965">
    <property type="entry name" value="Terpene_synth_N_sf"/>
</dbReference>
<dbReference type="InterPro" id="IPR050148">
    <property type="entry name" value="Terpene_synthase-like"/>
</dbReference>
<dbReference type="InterPro" id="IPR005630">
    <property type="entry name" value="Terpene_synthase_metal-bd"/>
</dbReference>
<dbReference type="InterPro" id="IPR008930">
    <property type="entry name" value="Terpenoid_cyclase/PrenylTrfase"/>
</dbReference>
<dbReference type="PANTHER" id="PTHR31225">
    <property type="entry name" value="OS04G0344100 PROTEIN-RELATED"/>
    <property type="match status" value="1"/>
</dbReference>
<dbReference type="PANTHER" id="PTHR31225:SF137">
    <property type="entry name" value="TERPENE SYNTHASE 11-RELATED"/>
    <property type="match status" value="1"/>
</dbReference>
<dbReference type="Pfam" id="PF01397">
    <property type="entry name" value="Terpene_synth"/>
    <property type="match status" value="1"/>
</dbReference>
<dbReference type="Pfam" id="PF03936">
    <property type="entry name" value="Terpene_synth_C"/>
    <property type="match status" value="1"/>
</dbReference>
<dbReference type="SFLD" id="SFLDS00005">
    <property type="entry name" value="Isoprenoid_Synthase_Type_I"/>
    <property type="match status" value="1"/>
</dbReference>
<dbReference type="SFLD" id="SFLDG01019">
    <property type="entry name" value="Terpene_Cyclase_Like_1_C_Termi"/>
    <property type="match status" value="1"/>
</dbReference>
<dbReference type="SUPFAM" id="SSF48239">
    <property type="entry name" value="Terpenoid cyclases/Protein prenyltransferases"/>
    <property type="match status" value="1"/>
</dbReference>
<dbReference type="SUPFAM" id="SSF48576">
    <property type="entry name" value="Terpenoid synthases"/>
    <property type="match status" value="1"/>
</dbReference>
<sequence>MAATRNLSLLAQSSQPWAGIYGSHGSPRPISSWLRRQSIAKTSYICMCTPLSMSQLIATPLITDIESLLKYLRQPQVLPHEIDDSTKRRELLERTRRELQTTLEPLQAMKMIDTLQRLGLAYHFEDDINSLLTGFSNGQPDEDLLTASLRFRLLRHNGHRINPNIFQKFMDKQGKFIDSLKEDTRGLFSLYEASYLGANGEDILLQALEFTKAHLKESLPSLAPPLAKKVSQALELPRHRRMARLEARRYIEEYGGENGHSPDLLELAKLDYNKVQSLHQLELSEISRWWKQLGLVDKLTFARDRPLECFLWTVGILPEPKYSSCRIELAKTIAILLVIDDIFDTHGTLDELILFTNAIRRWDLEAMEDLPEYMRICYMALYNTTNEICYKILKQNGWSVLPYLKATWIDMIEGFMLEASWLNTGYVPNMEEYVENGVTTAGAYMALVHLFFLIGQGVTEENVKLLVKPYPKLFSYSGRILRLWDDLGTAKEEQERGDLASSIDLFMRENNITSDEEGRKCILKIIDNLWKELNGELVSRHALPLAIIKAAFNMARASQVVYQHEEDSYFSSVDNYVQALFFTPFN</sequence>
<gene>
    <name evidence="4" type="primary">TPS4</name>
</gene>
<name>TPS4_CANOD</name>
<feature type="transit peptide" description="Chloroplast" evidence="2">
    <location>
        <begin position="1"/>
        <end position="47"/>
    </location>
</feature>
<feature type="chain" id="PRO_0000455181" description="Monoterpene synthase TPS4, chloroplastic">
    <location>
        <begin position="48"/>
        <end position="586"/>
    </location>
</feature>
<feature type="short sequence motif" description="DDXXD motif" evidence="6">
    <location>
        <begin position="340"/>
        <end position="344"/>
    </location>
</feature>
<feature type="binding site" evidence="1">
    <location>
        <position position="340"/>
    </location>
    <ligand>
        <name>Mg(2+)</name>
        <dbReference type="ChEBI" id="CHEBI:18420"/>
        <label>1</label>
    </ligand>
</feature>
<feature type="binding site" evidence="1">
    <location>
        <position position="340"/>
    </location>
    <ligand>
        <name>Mg(2+)</name>
        <dbReference type="ChEBI" id="CHEBI:18420"/>
        <label>2</label>
    </ligand>
</feature>
<feature type="binding site" evidence="1">
    <location>
        <position position="344"/>
    </location>
    <ligand>
        <name>Mg(2+)</name>
        <dbReference type="ChEBI" id="CHEBI:18420"/>
        <label>1</label>
    </ligand>
</feature>
<feature type="binding site" evidence="1">
    <location>
        <position position="344"/>
    </location>
    <ligand>
        <name>Mg(2+)</name>
        <dbReference type="ChEBI" id="CHEBI:18420"/>
        <label>2</label>
    </ligand>
</feature>
<feature type="binding site" evidence="1">
    <location>
        <position position="485"/>
    </location>
    <ligand>
        <name>Mg(2+)</name>
        <dbReference type="ChEBI" id="CHEBI:18420"/>
        <label>3</label>
    </ligand>
</feature>
<feature type="binding site" evidence="1">
    <location>
        <position position="489"/>
    </location>
    <ligand>
        <name>Mg(2+)</name>
        <dbReference type="ChEBI" id="CHEBI:18420"/>
        <label>3</label>
    </ligand>
</feature>
<feature type="binding site" evidence="1">
    <location>
        <position position="493"/>
    </location>
    <ligand>
        <name>Mg(2+)</name>
        <dbReference type="ChEBI" id="CHEBI:18420"/>
        <label>3</label>
    </ligand>
</feature>
<organism>
    <name type="scientific">Cananga odorata</name>
    <name type="common">Ylang-ylang tree</name>
    <name type="synonym">Uvaria odorata</name>
    <dbReference type="NCBI Taxonomy" id="13393"/>
    <lineage>
        <taxon>Eukaryota</taxon>
        <taxon>Viridiplantae</taxon>
        <taxon>Streptophyta</taxon>
        <taxon>Embryophyta</taxon>
        <taxon>Tracheophyta</taxon>
        <taxon>Spermatophyta</taxon>
        <taxon>Magnoliopsida</taxon>
        <taxon>Magnoliidae</taxon>
        <taxon>Magnoliales</taxon>
        <taxon>Annonaceae</taxon>
        <taxon>Ambavioideae</taxon>
        <taxon>Cananga</taxon>
    </lineage>
</organism>
<protein>
    <recommendedName>
        <fullName evidence="5">Monoterpene synthase TPS4, chloroplastic</fullName>
    </recommendedName>
    <alternativeName>
        <fullName evidence="5">Geraniol synthase TPS4</fullName>
        <ecNumber evidence="3">3.1.7.11</ecNumber>
    </alternativeName>
    <alternativeName>
        <fullName evidence="4">Terpene synthase 4</fullName>
        <shortName evidence="4">CoTPS4</shortName>
    </alternativeName>
</protein>